<feature type="chain" id="PRO_0000296715" description="Adenine deaminase">
    <location>
        <begin position="1"/>
        <end position="548"/>
    </location>
</feature>
<name>ADEC_BORAP</name>
<geneLocation type="plasmid">
    <name>lp34</name>
</geneLocation>
<geneLocation type="plasmid">
    <name>lp38</name>
</geneLocation>
<comment type="catalytic activity">
    <reaction evidence="1">
        <text>adenine + H2O + H(+) = hypoxanthine + NH4(+)</text>
        <dbReference type="Rhea" id="RHEA:23688"/>
        <dbReference type="ChEBI" id="CHEBI:15377"/>
        <dbReference type="ChEBI" id="CHEBI:15378"/>
        <dbReference type="ChEBI" id="CHEBI:16708"/>
        <dbReference type="ChEBI" id="CHEBI:17368"/>
        <dbReference type="ChEBI" id="CHEBI:28938"/>
        <dbReference type="EC" id="3.5.4.2"/>
    </reaction>
</comment>
<comment type="cofactor">
    <cofactor evidence="1">
        <name>Mn(2+)</name>
        <dbReference type="ChEBI" id="CHEBI:29035"/>
    </cofactor>
</comment>
<comment type="similarity">
    <text evidence="1">Belongs to the metallo-dependent hydrolases superfamily. Adenine deaminase family.</text>
</comment>
<dbReference type="EC" id="3.5.4.2" evidence="1"/>
<dbReference type="EMBL" id="CP000398">
    <property type="protein sequence ID" value="ABH02289.1"/>
    <property type="molecule type" value="Genomic_DNA"/>
</dbReference>
<dbReference type="EMBL" id="CP002949">
    <property type="protein sequence ID" value="AEL70584.1"/>
    <property type="molecule type" value="Genomic_DNA"/>
</dbReference>
<dbReference type="RefSeq" id="WP_011703927.1">
    <property type="nucleotide sequence ID" value="NC_008566.1"/>
</dbReference>
<dbReference type="SMR" id="Q0SLI9"/>
<dbReference type="KEGG" id="baf:BAPKO_3033"/>
<dbReference type="KEGG" id="bafz:BafPKo_J0003"/>
<dbReference type="PATRIC" id="fig|390236.22.peg.1370"/>
<dbReference type="HOGENOM" id="CLU_027935_0_0_12"/>
<dbReference type="OrthoDB" id="9775607at2"/>
<dbReference type="Proteomes" id="UP000005216">
    <property type="component" value="Plasmid lp38"/>
</dbReference>
<dbReference type="GO" id="GO:0000034">
    <property type="term" value="F:adenine deaminase activity"/>
    <property type="evidence" value="ECO:0007669"/>
    <property type="project" value="UniProtKB-UniRule"/>
</dbReference>
<dbReference type="GO" id="GO:0006146">
    <property type="term" value="P:adenine catabolic process"/>
    <property type="evidence" value="ECO:0007669"/>
    <property type="project" value="InterPro"/>
</dbReference>
<dbReference type="CDD" id="cd01295">
    <property type="entry name" value="AdeC"/>
    <property type="match status" value="1"/>
</dbReference>
<dbReference type="Gene3D" id="3.20.20.140">
    <property type="entry name" value="Metal-dependent hydrolases"/>
    <property type="match status" value="1"/>
</dbReference>
<dbReference type="Gene3D" id="2.30.40.10">
    <property type="entry name" value="Urease, subunit C, domain 1"/>
    <property type="match status" value="1"/>
</dbReference>
<dbReference type="HAMAP" id="MF_01518">
    <property type="entry name" value="Adenine_deamin"/>
    <property type="match status" value="1"/>
</dbReference>
<dbReference type="InterPro" id="IPR006679">
    <property type="entry name" value="Adenine_deam"/>
</dbReference>
<dbReference type="InterPro" id="IPR026912">
    <property type="entry name" value="Adenine_deam_C"/>
</dbReference>
<dbReference type="InterPro" id="IPR006680">
    <property type="entry name" value="Amidohydro-rel"/>
</dbReference>
<dbReference type="InterPro" id="IPR011059">
    <property type="entry name" value="Metal-dep_hydrolase_composite"/>
</dbReference>
<dbReference type="InterPro" id="IPR032466">
    <property type="entry name" value="Metal_Hydrolase"/>
</dbReference>
<dbReference type="NCBIfam" id="TIGR01178">
    <property type="entry name" value="ade"/>
    <property type="match status" value="1"/>
</dbReference>
<dbReference type="PANTHER" id="PTHR11113:SF2">
    <property type="entry name" value="ADENINE DEAMINASE"/>
    <property type="match status" value="1"/>
</dbReference>
<dbReference type="PANTHER" id="PTHR11113">
    <property type="entry name" value="N-ACETYLGLUCOSAMINE-6-PHOSPHATE DEACETYLASE"/>
    <property type="match status" value="1"/>
</dbReference>
<dbReference type="Pfam" id="PF13382">
    <property type="entry name" value="Adenine_deam_C"/>
    <property type="match status" value="1"/>
</dbReference>
<dbReference type="Pfam" id="PF01979">
    <property type="entry name" value="Amidohydro_1"/>
    <property type="match status" value="1"/>
</dbReference>
<dbReference type="SUPFAM" id="SSF51338">
    <property type="entry name" value="Composite domain of metallo-dependent hydrolases"/>
    <property type="match status" value="1"/>
</dbReference>
<dbReference type="SUPFAM" id="SSF51556">
    <property type="entry name" value="Metallo-dependent hydrolases"/>
    <property type="match status" value="1"/>
</dbReference>
<gene>
    <name evidence="1" type="primary">ade</name>
    <name type="ordered locus">BAPKO_3033</name>
    <name type="ordered locus">BafPKo_J0003</name>
</gene>
<protein>
    <recommendedName>
        <fullName evidence="1">Adenine deaminase</fullName>
        <shortName evidence="1">Adenase</shortName>
        <shortName evidence="1">Adenine aminase</shortName>
        <ecNumber evidence="1">3.5.4.2</ecNumber>
    </recommendedName>
</protein>
<reference key="1">
    <citation type="journal article" date="2006" name="BMC Genomics">
        <title>Comparative genome analysis: selection pressure on the Borrelia vls cassettes is essential for infectivity.</title>
        <authorList>
            <person name="Gloeckner G."/>
            <person name="Schulte-Spechtel U."/>
            <person name="Schilhabel M."/>
            <person name="Felder M."/>
            <person name="Suehnel J."/>
            <person name="Wilske B."/>
            <person name="Platzer M."/>
        </authorList>
    </citation>
    <scope>NUCLEOTIDE SEQUENCE [LARGE SCALE GENOMIC DNA]</scope>
    <source>
        <strain>PKo</strain>
        <plasmid>lp34</plasmid>
    </source>
</reference>
<reference key="2">
    <citation type="journal article" date="2011" name="J. Bacteriol.">
        <title>Whole-genome sequences of two Borrelia afzelii and two Borrelia garinii Lyme disease agent isolates.</title>
        <authorList>
            <person name="Casjens S.R."/>
            <person name="Mongodin E.F."/>
            <person name="Qiu W.G."/>
            <person name="Dunn J.J."/>
            <person name="Luft B.J."/>
            <person name="Fraser-Liggett C.M."/>
            <person name="Schutzer S.E."/>
        </authorList>
    </citation>
    <scope>NUCLEOTIDE SEQUENCE [LARGE SCALE GENOMIC DNA]</scope>
    <source>
        <strain>PKo</strain>
        <plasmid>lp38</plasmid>
    </source>
</reference>
<evidence type="ECO:0000255" key="1">
    <source>
        <dbReference type="HAMAP-Rule" id="MF_01518"/>
    </source>
</evidence>
<sequence length="548" mass="61030">MNLFKIKANYIDIFNKEIYPASITIENGYIVSIEKIDATLDEYVLPGFIDAHIHIESSFLIPSNFAHLVVQHGTVATISDPHEIANVNGIDGINFMINNSKKTEFKIFFGAPSCVPALSSKFETSGHVLDDQDVDKLMESNDIYYLSEVMDFKGVINKDVEVINKINSALKRNKVVDGHAPGLSPHLTLKYMSSGISTDHECSTIEDARYKLSLGVKIIIREGSAAKNFESLHPLISECSNKYCDSLMFCFDDAHPNDILHGHINSIVARAIGYGHDFFDVLKIACINPVLHYKIPVGLLRIGDPADFIITKDIKTFKIDKTYINGKLVYSDGISHIPLISEIPINNFNCSEKSILDFKFSTKNKMIPIINCINNQIITQKTMIDSNLLAPDFQSNIAEDILKIAIINRYEDNSKISIGFIKNFGIRKGAIGSTVAHDSHNIIVVGTNDEYLCKATNIIIENKGGLCALNNEKTIIIKLPISGLMSTLPAKEIAFQYMKLNDFCKNILGSQLDDPLMTLSFMSLTVVPHLKINDKGLFDVDSFCFLDY</sequence>
<keyword id="KW-0378">Hydrolase</keyword>
<keyword id="KW-0464">Manganese</keyword>
<keyword id="KW-0614">Plasmid</keyword>
<accession>Q0SLI9</accession>
<accession>G0ITY0</accession>
<organism>
    <name type="scientific">Borreliella afzelii (strain PKo)</name>
    <name type="common">Borrelia afzelii</name>
    <dbReference type="NCBI Taxonomy" id="390236"/>
    <lineage>
        <taxon>Bacteria</taxon>
        <taxon>Pseudomonadati</taxon>
        <taxon>Spirochaetota</taxon>
        <taxon>Spirochaetia</taxon>
        <taxon>Spirochaetales</taxon>
        <taxon>Borreliaceae</taxon>
        <taxon>Borreliella</taxon>
    </lineage>
</organism>
<proteinExistence type="inferred from homology"/>